<protein>
    <recommendedName>
        <fullName evidence="1">3-isopropylmalate dehydratase large subunit 1</fullName>
        <ecNumber evidence="1">4.2.1.33</ecNumber>
    </recommendedName>
    <alternativeName>
        <fullName evidence="1">Alpha-IPM isomerase 1</fullName>
        <shortName evidence="1">IPMI 1</shortName>
    </alternativeName>
    <alternativeName>
        <fullName evidence="1">Isopropylmalate isomerase 1</fullName>
    </alternativeName>
</protein>
<keyword id="KW-0004">4Fe-4S</keyword>
<keyword id="KW-0028">Amino-acid biosynthesis</keyword>
<keyword id="KW-0100">Branched-chain amino acid biosynthesis</keyword>
<keyword id="KW-0408">Iron</keyword>
<keyword id="KW-0411">Iron-sulfur</keyword>
<keyword id="KW-0432">Leucine biosynthesis</keyword>
<keyword id="KW-0456">Lyase</keyword>
<keyword id="KW-0479">Metal-binding</keyword>
<keyword id="KW-1185">Reference proteome</keyword>
<name>LEUC1_THEMA</name>
<organism>
    <name type="scientific">Thermotoga maritima (strain ATCC 43589 / DSM 3109 / JCM 10099 / NBRC 100826 / MSB8)</name>
    <dbReference type="NCBI Taxonomy" id="243274"/>
    <lineage>
        <taxon>Bacteria</taxon>
        <taxon>Thermotogati</taxon>
        <taxon>Thermotogota</taxon>
        <taxon>Thermotogae</taxon>
        <taxon>Thermotogales</taxon>
        <taxon>Thermotogaceae</taxon>
        <taxon>Thermotoga</taxon>
    </lineage>
</organism>
<reference key="1">
    <citation type="journal article" date="1999" name="Nature">
        <title>Evidence for lateral gene transfer between Archaea and Bacteria from genome sequence of Thermotoga maritima.</title>
        <authorList>
            <person name="Nelson K.E."/>
            <person name="Clayton R.A."/>
            <person name="Gill S.R."/>
            <person name="Gwinn M.L."/>
            <person name="Dodson R.J."/>
            <person name="Haft D.H."/>
            <person name="Hickey E.K."/>
            <person name="Peterson J.D."/>
            <person name="Nelson W.C."/>
            <person name="Ketchum K.A."/>
            <person name="McDonald L.A."/>
            <person name="Utterback T.R."/>
            <person name="Malek J.A."/>
            <person name="Linher K.D."/>
            <person name="Garrett M.M."/>
            <person name="Stewart A.M."/>
            <person name="Cotton M.D."/>
            <person name="Pratt M.S."/>
            <person name="Phillips C.A."/>
            <person name="Richardson D.L."/>
            <person name="Heidelberg J.F."/>
            <person name="Sutton G.G."/>
            <person name="Fleischmann R.D."/>
            <person name="Eisen J.A."/>
            <person name="White O."/>
            <person name="Salzberg S.L."/>
            <person name="Smith H.O."/>
            <person name="Venter J.C."/>
            <person name="Fraser C.M."/>
        </authorList>
    </citation>
    <scope>NUCLEOTIDE SEQUENCE [LARGE SCALE GENOMIC DNA]</scope>
    <source>
        <strain>ATCC 43589 / DSM 3109 / JCM 10099 / NBRC 100826 / MSB8</strain>
    </source>
</reference>
<sequence>MGKTLAEKIFSEHVGRDVKAGEIVLARVDIAMAQDGTGPLMINEFRELGFKEVKVPKAFLFIDHASPSPRKELSNSQKMMREFGKEMGVKVFDAGDGISHQILAEKYVKPGDLVAGADSHTCTAGGLGAFGTGMGSTDVAIIFGLGQNWFKVPETIKVVVNGKLQDGVYAKDIILEIARILGSDGATYKALEFHGSCIENMNVEDRLTISNMAVEVGAKAGLMPSDEKTREFLKKMGREEDFRELKADPDAVYETEIEIDATTLEPLVSLPHYVDNVRKVSEVEKEKIKIDQVFIGTCTNGRLQDLEIALKILEKHGKHPDVRLIVGPASRKVYMDALEKGIIKKFVELGAAVIPPGCGPCVGIHMGVLGDGERVLSTQNRNFKGRMGNPNAEIYLASPATAAATAVTGYITDPRRFI</sequence>
<proteinExistence type="inferred from homology"/>
<evidence type="ECO:0000255" key="1">
    <source>
        <dbReference type="HAMAP-Rule" id="MF_01027"/>
    </source>
</evidence>
<accession>Q9WYC7</accession>
<gene>
    <name evidence="1" type="primary">leuC1</name>
    <name type="ordered locus">TM_0291</name>
</gene>
<comment type="function">
    <text evidence="1">Catalyzes the isomerization between 2-isopropylmalate and 3-isopropylmalate, via the formation of 2-isopropylmaleate.</text>
</comment>
<comment type="catalytic activity">
    <reaction evidence="1">
        <text>(2R,3S)-3-isopropylmalate = (2S)-2-isopropylmalate</text>
        <dbReference type="Rhea" id="RHEA:32287"/>
        <dbReference type="ChEBI" id="CHEBI:1178"/>
        <dbReference type="ChEBI" id="CHEBI:35121"/>
        <dbReference type="EC" id="4.2.1.33"/>
    </reaction>
</comment>
<comment type="cofactor">
    <cofactor evidence="1">
        <name>[4Fe-4S] cluster</name>
        <dbReference type="ChEBI" id="CHEBI:49883"/>
    </cofactor>
    <text evidence="1">Binds 1 [4Fe-4S] cluster per subunit.</text>
</comment>
<comment type="pathway">
    <text evidence="1">Amino-acid biosynthesis; L-leucine biosynthesis; L-leucine from 3-methyl-2-oxobutanoate: step 2/4.</text>
</comment>
<comment type="subunit">
    <text evidence="1">Heterodimer of LeuC and LeuD.</text>
</comment>
<comment type="similarity">
    <text evidence="1">Belongs to the aconitase/IPM isomerase family. LeuC type 2 subfamily.</text>
</comment>
<dbReference type="EC" id="4.2.1.33" evidence="1"/>
<dbReference type="EMBL" id="AE000512">
    <property type="protein sequence ID" value="AAD35379.1"/>
    <property type="molecule type" value="Genomic_DNA"/>
</dbReference>
<dbReference type="PIR" id="C72394">
    <property type="entry name" value="C72394"/>
</dbReference>
<dbReference type="RefSeq" id="NP_228103.1">
    <property type="nucleotide sequence ID" value="NC_000853.1"/>
</dbReference>
<dbReference type="RefSeq" id="WP_004083007.1">
    <property type="nucleotide sequence ID" value="NZ_CP011107.1"/>
</dbReference>
<dbReference type="SMR" id="Q9WYC7"/>
<dbReference type="FunCoup" id="Q9WYC7">
    <property type="interactions" value="352"/>
</dbReference>
<dbReference type="STRING" id="243274.TM_0291"/>
<dbReference type="PaxDb" id="243274-THEMA_03270"/>
<dbReference type="EnsemblBacteria" id="AAD35379">
    <property type="protein sequence ID" value="AAD35379"/>
    <property type="gene ID" value="TM_0291"/>
</dbReference>
<dbReference type="KEGG" id="tma:TM0291"/>
<dbReference type="KEGG" id="tmi:THEMA_03270"/>
<dbReference type="KEGG" id="tmm:Tmari_0289"/>
<dbReference type="KEGG" id="tmw:THMA_0298"/>
<dbReference type="eggNOG" id="COG0065">
    <property type="taxonomic scope" value="Bacteria"/>
</dbReference>
<dbReference type="InParanoid" id="Q9WYC7"/>
<dbReference type="OrthoDB" id="9802769at2"/>
<dbReference type="UniPathway" id="UPA00048">
    <property type="reaction ID" value="UER00071"/>
</dbReference>
<dbReference type="Proteomes" id="UP000008183">
    <property type="component" value="Chromosome"/>
</dbReference>
<dbReference type="GO" id="GO:0003861">
    <property type="term" value="F:3-isopropylmalate dehydratase activity"/>
    <property type="evidence" value="ECO:0007669"/>
    <property type="project" value="UniProtKB-UniRule"/>
</dbReference>
<dbReference type="GO" id="GO:0051539">
    <property type="term" value="F:4 iron, 4 sulfur cluster binding"/>
    <property type="evidence" value="ECO:0007669"/>
    <property type="project" value="UniProtKB-KW"/>
</dbReference>
<dbReference type="GO" id="GO:0046872">
    <property type="term" value="F:metal ion binding"/>
    <property type="evidence" value="ECO:0007669"/>
    <property type="project" value="UniProtKB-KW"/>
</dbReference>
<dbReference type="GO" id="GO:0009098">
    <property type="term" value="P:L-leucine biosynthetic process"/>
    <property type="evidence" value="ECO:0007669"/>
    <property type="project" value="UniProtKB-UniRule"/>
</dbReference>
<dbReference type="CDD" id="cd01583">
    <property type="entry name" value="IPMI"/>
    <property type="match status" value="1"/>
</dbReference>
<dbReference type="Gene3D" id="3.30.499.10">
    <property type="entry name" value="Aconitase, domain 3"/>
    <property type="match status" value="2"/>
</dbReference>
<dbReference type="HAMAP" id="MF_01027">
    <property type="entry name" value="LeuC_type2"/>
    <property type="match status" value="1"/>
</dbReference>
<dbReference type="InterPro" id="IPR015931">
    <property type="entry name" value="Acnase/IPM_dHydase_lsu_aba_1/3"/>
</dbReference>
<dbReference type="InterPro" id="IPR001030">
    <property type="entry name" value="Acoase/IPM_deHydtase_lsu_aba"/>
</dbReference>
<dbReference type="InterPro" id="IPR018136">
    <property type="entry name" value="Aconitase_4Fe-4S_BS"/>
</dbReference>
<dbReference type="InterPro" id="IPR036008">
    <property type="entry name" value="Aconitase_4Fe-4S_dom"/>
</dbReference>
<dbReference type="InterPro" id="IPR011826">
    <property type="entry name" value="HAcnase/IPMdehydase_lsu_prok"/>
</dbReference>
<dbReference type="InterPro" id="IPR006251">
    <property type="entry name" value="Homoacnase/IPMdehydase_lsu"/>
</dbReference>
<dbReference type="InterPro" id="IPR050067">
    <property type="entry name" value="IPM_dehydratase_rel_enz"/>
</dbReference>
<dbReference type="InterPro" id="IPR033941">
    <property type="entry name" value="IPMI_cat"/>
</dbReference>
<dbReference type="NCBIfam" id="TIGR01343">
    <property type="entry name" value="hacA_fam"/>
    <property type="match status" value="1"/>
</dbReference>
<dbReference type="NCBIfam" id="TIGR02086">
    <property type="entry name" value="IPMI_arch"/>
    <property type="match status" value="1"/>
</dbReference>
<dbReference type="NCBIfam" id="NF001614">
    <property type="entry name" value="PRK00402.1"/>
    <property type="match status" value="1"/>
</dbReference>
<dbReference type="PANTHER" id="PTHR43822:SF2">
    <property type="entry name" value="HOMOACONITASE, MITOCHONDRIAL"/>
    <property type="match status" value="1"/>
</dbReference>
<dbReference type="PANTHER" id="PTHR43822">
    <property type="entry name" value="HOMOACONITASE, MITOCHONDRIAL-RELATED"/>
    <property type="match status" value="1"/>
</dbReference>
<dbReference type="Pfam" id="PF00330">
    <property type="entry name" value="Aconitase"/>
    <property type="match status" value="1"/>
</dbReference>
<dbReference type="PRINTS" id="PR00415">
    <property type="entry name" value="ACONITASE"/>
</dbReference>
<dbReference type="SUPFAM" id="SSF53732">
    <property type="entry name" value="Aconitase iron-sulfur domain"/>
    <property type="match status" value="1"/>
</dbReference>
<dbReference type="PROSITE" id="PS00450">
    <property type="entry name" value="ACONITASE_1"/>
    <property type="match status" value="1"/>
</dbReference>
<dbReference type="PROSITE" id="PS01244">
    <property type="entry name" value="ACONITASE_2"/>
    <property type="match status" value="1"/>
</dbReference>
<feature type="chain" id="PRO_0000076860" description="3-isopropylmalate dehydratase large subunit 1">
    <location>
        <begin position="1"/>
        <end position="418"/>
    </location>
</feature>
<feature type="binding site" evidence="1">
    <location>
        <position position="298"/>
    </location>
    <ligand>
        <name>[4Fe-4S] cluster</name>
        <dbReference type="ChEBI" id="CHEBI:49883"/>
    </ligand>
</feature>
<feature type="binding site" evidence="1">
    <location>
        <position position="358"/>
    </location>
    <ligand>
        <name>[4Fe-4S] cluster</name>
        <dbReference type="ChEBI" id="CHEBI:49883"/>
    </ligand>
</feature>
<feature type="binding site" evidence="1">
    <location>
        <position position="361"/>
    </location>
    <ligand>
        <name>[4Fe-4S] cluster</name>
        <dbReference type="ChEBI" id="CHEBI:49883"/>
    </ligand>
</feature>